<keyword id="KW-0963">Cytoplasm</keyword>
<keyword id="KW-0342">GTP-binding</keyword>
<keyword id="KW-0436">Ligase</keyword>
<keyword id="KW-0460">Magnesium</keyword>
<keyword id="KW-0479">Metal-binding</keyword>
<keyword id="KW-0547">Nucleotide-binding</keyword>
<keyword id="KW-0658">Purine biosynthesis</keyword>
<keyword id="KW-1185">Reference proteome</keyword>
<accession>B6JUV1</accession>
<protein>
    <recommendedName>
        <fullName evidence="2">Adenylosuccinate synthetase</fullName>
        <shortName evidence="2">AMPSase</shortName>
        <shortName evidence="2">AdSS</shortName>
        <ecNumber evidence="2">6.3.4.4</ecNumber>
    </recommendedName>
    <alternativeName>
        <fullName evidence="2">IMP--aspartate ligase</fullName>
    </alternativeName>
</protein>
<name>PURA_SCHJY</name>
<sequence length="434" mass="47819">MALVSETGVDVSTDGITVVLGSQWGDEGKGKLVDILCDNVDICARCAGGNNAGHTIVANGQTYDFHILPSGLVNPKSVNLIGSGVVVYLPAFFHELENLVKKGLDCTNRIFISDRAQLVFDYHQRADALNEAELGGKSIGTTGKGIGPAYSTKATRSGIRVHHLYNWPEFESRYRKNVRDLQKRYGAFEYDVEGELVRYKELAAKLQPYVVDSIAFIHTGLKEKKRILVEGANALMLDLDFGTYPYVTSSNTTIGGVCTGLGVPPRAIANVIGVVKAYTTRVGAGPFPTEQLNEIGDHLQKVGREFGVTTGRKRRCGWLDLVVLKYSTLINGYDSLNLTKLDILDDFKEIKVAVAYIVDGKRIETFPADLDSLESAEIIYETFPGWQTKTTGITRWEDMPENAKKYIEFIEKFLGVPIKYIGVGPGRDEVLVKH</sequence>
<reference key="1">
    <citation type="journal article" date="2011" name="Science">
        <title>Comparative functional genomics of the fission yeasts.</title>
        <authorList>
            <person name="Rhind N."/>
            <person name="Chen Z."/>
            <person name="Yassour M."/>
            <person name="Thompson D.A."/>
            <person name="Haas B.J."/>
            <person name="Habib N."/>
            <person name="Wapinski I."/>
            <person name="Roy S."/>
            <person name="Lin M.F."/>
            <person name="Heiman D.I."/>
            <person name="Young S.K."/>
            <person name="Furuya K."/>
            <person name="Guo Y."/>
            <person name="Pidoux A."/>
            <person name="Chen H.M."/>
            <person name="Robbertse B."/>
            <person name="Goldberg J.M."/>
            <person name="Aoki K."/>
            <person name="Bayne E.H."/>
            <person name="Berlin A.M."/>
            <person name="Desjardins C.A."/>
            <person name="Dobbs E."/>
            <person name="Dukaj L."/>
            <person name="Fan L."/>
            <person name="FitzGerald M.G."/>
            <person name="French C."/>
            <person name="Gujja S."/>
            <person name="Hansen K."/>
            <person name="Keifenheim D."/>
            <person name="Levin J.Z."/>
            <person name="Mosher R.A."/>
            <person name="Mueller C.A."/>
            <person name="Pfiffner J."/>
            <person name="Priest M."/>
            <person name="Russ C."/>
            <person name="Smialowska A."/>
            <person name="Swoboda P."/>
            <person name="Sykes S.M."/>
            <person name="Vaughn M."/>
            <person name="Vengrova S."/>
            <person name="Yoder R."/>
            <person name="Zeng Q."/>
            <person name="Allshire R."/>
            <person name="Baulcombe D."/>
            <person name="Birren B.W."/>
            <person name="Brown W."/>
            <person name="Ekwall K."/>
            <person name="Kellis M."/>
            <person name="Leatherwood J."/>
            <person name="Levin H."/>
            <person name="Margalit H."/>
            <person name="Martienssen R."/>
            <person name="Nieduszynski C.A."/>
            <person name="Spatafora J.W."/>
            <person name="Friedman N."/>
            <person name="Dalgaard J.Z."/>
            <person name="Baumann P."/>
            <person name="Niki H."/>
            <person name="Regev A."/>
            <person name="Nusbaum C."/>
        </authorList>
    </citation>
    <scope>NUCLEOTIDE SEQUENCE [LARGE SCALE GENOMIC DNA]</scope>
    <source>
        <strain>yFS275 / FY16936</strain>
    </source>
</reference>
<organism>
    <name type="scientific">Schizosaccharomyces japonicus (strain yFS275 / FY16936)</name>
    <name type="common">Fission yeast</name>
    <dbReference type="NCBI Taxonomy" id="402676"/>
    <lineage>
        <taxon>Eukaryota</taxon>
        <taxon>Fungi</taxon>
        <taxon>Dikarya</taxon>
        <taxon>Ascomycota</taxon>
        <taxon>Taphrinomycotina</taxon>
        <taxon>Schizosaccharomycetes</taxon>
        <taxon>Schizosaccharomycetales</taxon>
        <taxon>Schizosaccharomycetaceae</taxon>
        <taxon>Schizosaccharomyces</taxon>
    </lineage>
</organism>
<gene>
    <name type="ORF">SJAG_00044</name>
</gene>
<evidence type="ECO:0000250" key="1"/>
<evidence type="ECO:0000255" key="2">
    <source>
        <dbReference type="HAMAP-Rule" id="MF_03125"/>
    </source>
</evidence>
<feature type="chain" id="PRO_0000399364" description="Adenylosuccinate synthetase">
    <location>
        <begin position="1"/>
        <end position="434"/>
    </location>
</feature>
<feature type="active site" description="Proton acceptor" evidence="2">
    <location>
        <position position="26"/>
    </location>
</feature>
<feature type="active site" description="Proton donor" evidence="2">
    <location>
        <position position="54"/>
    </location>
</feature>
<feature type="binding site" evidence="2">
    <location>
        <begin position="25"/>
        <end position="31"/>
    </location>
    <ligand>
        <name>GTP</name>
        <dbReference type="ChEBI" id="CHEBI:37565"/>
    </ligand>
</feature>
<feature type="binding site" description="in other chain" evidence="2">
    <location>
        <begin position="26"/>
        <end position="29"/>
    </location>
    <ligand>
        <name>IMP</name>
        <dbReference type="ChEBI" id="CHEBI:58053"/>
        <note>ligand shared between dimeric partners</note>
    </ligand>
</feature>
<feature type="binding site" evidence="2">
    <location>
        <position position="26"/>
    </location>
    <ligand>
        <name>Mg(2+)</name>
        <dbReference type="ChEBI" id="CHEBI:18420"/>
    </ligand>
</feature>
<feature type="binding site" description="in other chain" evidence="2">
    <location>
        <begin position="51"/>
        <end position="54"/>
    </location>
    <ligand>
        <name>IMP</name>
        <dbReference type="ChEBI" id="CHEBI:58053"/>
        <note>ligand shared between dimeric partners</note>
    </ligand>
</feature>
<feature type="binding site" evidence="2">
    <location>
        <begin position="53"/>
        <end position="55"/>
    </location>
    <ligand>
        <name>GTP</name>
        <dbReference type="ChEBI" id="CHEBI:37565"/>
    </ligand>
</feature>
<feature type="binding site" evidence="2">
    <location>
        <position position="53"/>
    </location>
    <ligand>
        <name>Mg(2+)</name>
        <dbReference type="ChEBI" id="CHEBI:18420"/>
    </ligand>
</feature>
<feature type="binding site" description="in other chain" evidence="2">
    <location>
        <position position="142"/>
    </location>
    <ligand>
        <name>IMP</name>
        <dbReference type="ChEBI" id="CHEBI:58053"/>
        <note>ligand shared between dimeric partners</note>
    </ligand>
</feature>
<feature type="binding site" evidence="2">
    <location>
        <position position="156"/>
    </location>
    <ligand>
        <name>IMP</name>
        <dbReference type="ChEBI" id="CHEBI:58053"/>
        <note>ligand shared between dimeric partners</note>
    </ligand>
</feature>
<feature type="binding site" description="in other chain" evidence="2">
    <location>
        <position position="233"/>
    </location>
    <ligand>
        <name>IMP</name>
        <dbReference type="ChEBI" id="CHEBI:58053"/>
        <note>ligand shared between dimeric partners</note>
    </ligand>
</feature>
<feature type="binding site" description="in other chain" evidence="2">
    <location>
        <position position="248"/>
    </location>
    <ligand>
        <name>IMP</name>
        <dbReference type="ChEBI" id="CHEBI:58053"/>
        <note>ligand shared between dimeric partners</note>
    </ligand>
</feature>
<feature type="binding site" evidence="2">
    <location>
        <begin position="308"/>
        <end position="314"/>
    </location>
    <ligand>
        <name>substrate</name>
    </ligand>
</feature>
<feature type="binding site" description="in other chain" evidence="2">
    <location>
        <position position="312"/>
    </location>
    <ligand>
        <name>IMP</name>
        <dbReference type="ChEBI" id="CHEBI:58053"/>
        <note>ligand shared between dimeric partners</note>
    </ligand>
</feature>
<feature type="binding site" evidence="2">
    <location>
        <position position="314"/>
    </location>
    <ligand>
        <name>GTP</name>
        <dbReference type="ChEBI" id="CHEBI:37565"/>
    </ligand>
</feature>
<feature type="binding site" evidence="2">
    <location>
        <begin position="340"/>
        <end position="342"/>
    </location>
    <ligand>
        <name>GTP</name>
        <dbReference type="ChEBI" id="CHEBI:37565"/>
    </ligand>
</feature>
<feature type="binding site" evidence="2">
    <location>
        <begin position="422"/>
        <end position="424"/>
    </location>
    <ligand>
        <name>GTP</name>
        <dbReference type="ChEBI" id="CHEBI:37565"/>
    </ligand>
</feature>
<proteinExistence type="inferred from homology"/>
<dbReference type="EC" id="6.3.4.4" evidence="2"/>
<dbReference type="EMBL" id="KE651166">
    <property type="protein sequence ID" value="EEB05052.1"/>
    <property type="molecule type" value="Genomic_DNA"/>
</dbReference>
<dbReference type="RefSeq" id="XP_002171345.1">
    <property type="nucleotide sequence ID" value="XM_002171309.2"/>
</dbReference>
<dbReference type="SMR" id="B6JUV1"/>
<dbReference type="STRING" id="402676.B6JUV1"/>
<dbReference type="EnsemblFungi" id="EEB05052">
    <property type="protein sequence ID" value="EEB05052"/>
    <property type="gene ID" value="SJAG_00044"/>
</dbReference>
<dbReference type="GeneID" id="7050994"/>
<dbReference type="JaponicusDB" id="SJAG_00044">
    <property type="gene designation" value="ade2"/>
</dbReference>
<dbReference type="VEuPathDB" id="FungiDB:SJAG_00044"/>
<dbReference type="eggNOG" id="KOG1355">
    <property type="taxonomic scope" value="Eukaryota"/>
</dbReference>
<dbReference type="HOGENOM" id="CLU_029848_3_2_1"/>
<dbReference type="OMA" id="FHHAKPI"/>
<dbReference type="OrthoDB" id="10265645at2759"/>
<dbReference type="UniPathway" id="UPA00075">
    <property type="reaction ID" value="UER00335"/>
</dbReference>
<dbReference type="Proteomes" id="UP000001744">
    <property type="component" value="Unassembled WGS sequence"/>
</dbReference>
<dbReference type="GO" id="GO:0005737">
    <property type="term" value="C:cytoplasm"/>
    <property type="evidence" value="ECO:0000318"/>
    <property type="project" value="GO_Central"/>
</dbReference>
<dbReference type="GO" id="GO:0004019">
    <property type="term" value="F:adenylosuccinate synthase activity"/>
    <property type="evidence" value="ECO:0000318"/>
    <property type="project" value="GO_Central"/>
</dbReference>
<dbReference type="GO" id="GO:0016208">
    <property type="term" value="F:AMP binding"/>
    <property type="evidence" value="ECO:0007669"/>
    <property type="project" value="EnsemblFungi"/>
</dbReference>
<dbReference type="GO" id="GO:0019002">
    <property type="term" value="F:GMP binding"/>
    <property type="evidence" value="ECO:0007669"/>
    <property type="project" value="EnsemblFungi"/>
</dbReference>
<dbReference type="GO" id="GO:0005525">
    <property type="term" value="F:GTP binding"/>
    <property type="evidence" value="ECO:0007669"/>
    <property type="project" value="UniProtKB-UniRule"/>
</dbReference>
<dbReference type="GO" id="GO:0000287">
    <property type="term" value="F:magnesium ion binding"/>
    <property type="evidence" value="ECO:0007669"/>
    <property type="project" value="UniProtKB-UniRule"/>
</dbReference>
<dbReference type="GO" id="GO:0044208">
    <property type="term" value="P:'de novo' AMP biosynthetic process"/>
    <property type="evidence" value="ECO:0000318"/>
    <property type="project" value="GO_Central"/>
</dbReference>
<dbReference type="GO" id="GO:0071276">
    <property type="term" value="P:cellular response to cadmium ion"/>
    <property type="evidence" value="ECO:0007669"/>
    <property type="project" value="EnsemblFungi"/>
</dbReference>
<dbReference type="GO" id="GO:0046040">
    <property type="term" value="P:IMP metabolic process"/>
    <property type="evidence" value="ECO:0000318"/>
    <property type="project" value="GO_Central"/>
</dbReference>
<dbReference type="CDD" id="cd03108">
    <property type="entry name" value="AdSS"/>
    <property type="match status" value="1"/>
</dbReference>
<dbReference type="FunFam" id="3.90.170.10:FF:000001">
    <property type="entry name" value="Adenylosuccinate synthetase"/>
    <property type="match status" value="1"/>
</dbReference>
<dbReference type="FunFam" id="1.10.300.10:FF:000002">
    <property type="entry name" value="Adenylosuccinate synthetase, chloroplastic"/>
    <property type="match status" value="1"/>
</dbReference>
<dbReference type="Gene3D" id="3.40.440.10">
    <property type="entry name" value="Adenylosuccinate Synthetase, subunit A, domain 1"/>
    <property type="match status" value="1"/>
</dbReference>
<dbReference type="Gene3D" id="1.10.300.10">
    <property type="entry name" value="Adenylosuccinate Synthetase, subunit A, domain 2"/>
    <property type="match status" value="1"/>
</dbReference>
<dbReference type="Gene3D" id="3.90.170.10">
    <property type="entry name" value="Adenylosuccinate Synthetase, subunit A, domain 3"/>
    <property type="match status" value="1"/>
</dbReference>
<dbReference type="HAMAP" id="MF_00011">
    <property type="entry name" value="Adenylosucc_synth"/>
    <property type="match status" value="1"/>
</dbReference>
<dbReference type="InterPro" id="IPR018220">
    <property type="entry name" value="Adenylosuccin_syn_GTP-bd"/>
</dbReference>
<dbReference type="InterPro" id="IPR033128">
    <property type="entry name" value="Adenylosuccin_syn_Lys_AS"/>
</dbReference>
<dbReference type="InterPro" id="IPR042109">
    <property type="entry name" value="Adenylosuccinate_synth_dom1"/>
</dbReference>
<dbReference type="InterPro" id="IPR042110">
    <property type="entry name" value="Adenylosuccinate_synth_dom2"/>
</dbReference>
<dbReference type="InterPro" id="IPR042111">
    <property type="entry name" value="Adenylosuccinate_synth_dom3"/>
</dbReference>
<dbReference type="InterPro" id="IPR001114">
    <property type="entry name" value="Adenylosuccinate_synthetase"/>
</dbReference>
<dbReference type="InterPro" id="IPR027417">
    <property type="entry name" value="P-loop_NTPase"/>
</dbReference>
<dbReference type="NCBIfam" id="NF002223">
    <property type="entry name" value="PRK01117.1"/>
    <property type="match status" value="1"/>
</dbReference>
<dbReference type="NCBIfam" id="TIGR00184">
    <property type="entry name" value="purA"/>
    <property type="match status" value="1"/>
</dbReference>
<dbReference type="PANTHER" id="PTHR11846">
    <property type="entry name" value="ADENYLOSUCCINATE SYNTHETASE"/>
    <property type="match status" value="1"/>
</dbReference>
<dbReference type="PANTHER" id="PTHR11846:SF0">
    <property type="entry name" value="ADENYLOSUCCINATE SYNTHETASE"/>
    <property type="match status" value="1"/>
</dbReference>
<dbReference type="Pfam" id="PF00709">
    <property type="entry name" value="Adenylsucc_synt"/>
    <property type="match status" value="1"/>
</dbReference>
<dbReference type="SMART" id="SM00788">
    <property type="entry name" value="Adenylsucc_synt"/>
    <property type="match status" value="1"/>
</dbReference>
<dbReference type="SUPFAM" id="SSF52540">
    <property type="entry name" value="P-loop containing nucleoside triphosphate hydrolases"/>
    <property type="match status" value="1"/>
</dbReference>
<dbReference type="PROSITE" id="PS01266">
    <property type="entry name" value="ADENYLOSUCCIN_SYN_1"/>
    <property type="match status" value="1"/>
</dbReference>
<dbReference type="PROSITE" id="PS00513">
    <property type="entry name" value="ADENYLOSUCCIN_SYN_2"/>
    <property type="match status" value="1"/>
</dbReference>
<comment type="function">
    <text evidence="1">Plays an important role in the de novo pathway and in the salvage pathway of purine nucleotide biosynthesis. Catalyzes the first committed step in the biosynthesis of AMP from IMP (By similarity).</text>
</comment>
<comment type="catalytic activity">
    <reaction evidence="2">
        <text>IMP + L-aspartate + GTP = N(6)-(1,2-dicarboxyethyl)-AMP + GDP + phosphate + 2 H(+)</text>
        <dbReference type="Rhea" id="RHEA:15753"/>
        <dbReference type="ChEBI" id="CHEBI:15378"/>
        <dbReference type="ChEBI" id="CHEBI:29991"/>
        <dbReference type="ChEBI" id="CHEBI:37565"/>
        <dbReference type="ChEBI" id="CHEBI:43474"/>
        <dbReference type="ChEBI" id="CHEBI:57567"/>
        <dbReference type="ChEBI" id="CHEBI:58053"/>
        <dbReference type="ChEBI" id="CHEBI:58189"/>
        <dbReference type="EC" id="6.3.4.4"/>
    </reaction>
</comment>
<comment type="cofactor">
    <cofactor evidence="2">
        <name>Mg(2+)</name>
        <dbReference type="ChEBI" id="CHEBI:18420"/>
    </cofactor>
    <text evidence="2">Binds 1 Mg(2+) ion per subunit.</text>
</comment>
<comment type="pathway">
    <text evidence="2">Purine metabolism; AMP biosynthesis via de novo pathway; AMP from IMP: step 1/2.</text>
</comment>
<comment type="subunit">
    <text evidence="2">Homodimer.</text>
</comment>
<comment type="subcellular location">
    <subcellularLocation>
        <location evidence="2">Cytoplasm</location>
    </subcellularLocation>
</comment>
<comment type="similarity">
    <text evidence="2">Belongs to the adenylosuccinate synthetase family.</text>
</comment>